<feature type="chain" id="PRO_0000338781" description="Translation initiation factor IF-1">
    <location>
        <begin position="1"/>
        <end position="72"/>
    </location>
</feature>
<feature type="domain" description="S1-like" evidence="1">
    <location>
        <begin position="1"/>
        <end position="72"/>
    </location>
</feature>
<dbReference type="EMBL" id="CP000548">
    <property type="protein sequence ID" value="ABO05482.1"/>
    <property type="molecule type" value="Genomic_DNA"/>
</dbReference>
<dbReference type="RefSeq" id="WP_004185257.1">
    <property type="nucleotide sequence ID" value="NZ_CP007802.1"/>
</dbReference>
<dbReference type="BMRB" id="A3MRX5"/>
<dbReference type="SMR" id="A3MRX5"/>
<dbReference type="GeneID" id="92980298"/>
<dbReference type="KEGG" id="bmaz:BM44_3020"/>
<dbReference type="KEGG" id="bmn:BMA10247_3499"/>
<dbReference type="PATRIC" id="fig|320389.8.peg.3392"/>
<dbReference type="GO" id="GO:0005829">
    <property type="term" value="C:cytosol"/>
    <property type="evidence" value="ECO:0007669"/>
    <property type="project" value="TreeGrafter"/>
</dbReference>
<dbReference type="GO" id="GO:0043022">
    <property type="term" value="F:ribosome binding"/>
    <property type="evidence" value="ECO:0007669"/>
    <property type="project" value="UniProtKB-UniRule"/>
</dbReference>
<dbReference type="GO" id="GO:0019843">
    <property type="term" value="F:rRNA binding"/>
    <property type="evidence" value="ECO:0007669"/>
    <property type="project" value="UniProtKB-UniRule"/>
</dbReference>
<dbReference type="GO" id="GO:0003743">
    <property type="term" value="F:translation initiation factor activity"/>
    <property type="evidence" value="ECO:0007669"/>
    <property type="project" value="UniProtKB-UniRule"/>
</dbReference>
<dbReference type="CDD" id="cd04451">
    <property type="entry name" value="S1_IF1"/>
    <property type="match status" value="1"/>
</dbReference>
<dbReference type="FunFam" id="2.40.50.140:FF:000002">
    <property type="entry name" value="Translation initiation factor IF-1"/>
    <property type="match status" value="1"/>
</dbReference>
<dbReference type="Gene3D" id="2.40.50.140">
    <property type="entry name" value="Nucleic acid-binding proteins"/>
    <property type="match status" value="1"/>
</dbReference>
<dbReference type="HAMAP" id="MF_00075">
    <property type="entry name" value="IF_1"/>
    <property type="match status" value="1"/>
</dbReference>
<dbReference type="InterPro" id="IPR012340">
    <property type="entry name" value="NA-bd_OB-fold"/>
</dbReference>
<dbReference type="InterPro" id="IPR006196">
    <property type="entry name" value="RNA-binding_domain_S1_IF1"/>
</dbReference>
<dbReference type="InterPro" id="IPR003029">
    <property type="entry name" value="S1_domain"/>
</dbReference>
<dbReference type="InterPro" id="IPR004368">
    <property type="entry name" value="TIF_IF1"/>
</dbReference>
<dbReference type="NCBIfam" id="TIGR00008">
    <property type="entry name" value="infA"/>
    <property type="match status" value="1"/>
</dbReference>
<dbReference type="PANTHER" id="PTHR33370">
    <property type="entry name" value="TRANSLATION INITIATION FACTOR IF-1, CHLOROPLASTIC"/>
    <property type="match status" value="1"/>
</dbReference>
<dbReference type="PANTHER" id="PTHR33370:SF1">
    <property type="entry name" value="TRANSLATION INITIATION FACTOR IF-1, CHLOROPLASTIC"/>
    <property type="match status" value="1"/>
</dbReference>
<dbReference type="Pfam" id="PF01176">
    <property type="entry name" value="eIF-1a"/>
    <property type="match status" value="1"/>
</dbReference>
<dbReference type="SMART" id="SM00316">
    <property type="entry name" value="S1"/>
    <property type="match status" value="1"/>
</dbReference>
<dbReference type="SUPFAM" id="SSF50249">
    <property type="entry name" value="Nucleic acid-binding proteins"/>
    <property type="match status" value="1"/>
</dbReference>
<dbReference type="PROSITE" id="PS50832">
    <property type="entry name" value="S1_IF1_TYPE"/>
    <property type="match status" value="1"/>
</dbReference>
<comment type="function">
    <text evidence="1">One of the essential components for the initiation of protein synthesis. Stabilizes the binding of IF-2 and IF-3 on the 30S subunit to which N-formylmethionyl-tRNA(fMet) subsequently binds. Helps modulate mRNA selection, yielding the 30S pre-initiation complex (PIC). Upon addition of the 50S ribosomal subunit IF-1, IF-2 and IF-3 are released leaving the mature 70S translation initiation complex.</text>
</comment>
<comment type="subunit">
    <text evidence="1">Component of the 30S ribosomal translation pre-initiation complex which assembles on the 30S ribosome in the order IF-2 and IF-3, IF-1 and N-formylmethionyl-tRNA(fMet); mRNA recruitment can occur at any time during PIC assembly.</text>
</comment>
<comment type="subcellular location">
    <subcellularLocation>
        <location evidence="1">Cytoplasm</location>
    </subcellularLocation>
</comment>
<comment type="similarity">
    <text evidence="1">Belongs to the IF-1 family.</text>
</comment>
<sequence length="72" mass="8252">MAKDDVIQMQGEVIENLPNATFRVKLENGHVVLGHISGKMRMHYIRIFPGDKVTVELTPYDLSRARIVFRAK</sequence>
<protein>
    <recommendedName>
        <fullName evidence="1">Translation initiation factor IF-1</fullName>
    </recommendedName>
</protein>
<evidence type="ECO:0000255" key="1">
    <source>
        <dbReference type="HAMAP-Rule" id="MF_00075"/>
    </source>
</evidence>
<name>IF1_BURM7</name>
<proteinExistence type="inferred from homology"/>
<gene>
    <name evidence="1" type="primary">infA</name>
    <name type="ordered locus">BMA10247_3499</name>
</gene>
<reference key="1">
    <citation type="journal article" date="2010" name="Genome Biol. Evol.">
        <title>Continuing evolution of Burkholderia mallei through genome reduction and large-scale rearrangements.</title>
        <authorList>
            <person name="Losada L."/>
            <person name="Ronning C.M."/>
            <person name="DeShazer D."/>
            <person name="Woods D."/>
            <person name="Fedorova N."/>
            <person name="Kim H.S."/>
            <person name="Shabalina S.A."/>
            <person name="Pearson T.R."/>
            <person name="Brinkac L."/>
            <person name="Tan P."/>
            <person name="Nandi T."/>
            <person name="Crabtree J."/>
            <person name="Badger J."/>
            <person name="Beckstrom-Sternberg S."/>
            <person name="Saqib M."/>
            <person name="Schutzer S.E."/>
            <person name="Keim P."/>
            <person name="Nierman W.C."/>
        </authorList>
    </citation>
    <scope>NUCLEOTIDE SEQUENCE [LARGE SCALE GENOMIC DNA]</scope>
    <source>
        <strain>NCTC 10247</strain>
    </source>
</reference>
<accession>A3MRX5</accession>
<organism>
    <name type="scientific">Burkholderia mallei (strain NCTC 10247)</name>
    <dbReference type="NCBI Taxonomy" id="320389"/>
    <lineage>
        <taxon>Bacteria</taxon>
        <taxon>Pseudomonadati</taxon>
        <taxon>Pseudomonadota</taxon>
        <taxon>Betaproteobacteria</taxon>
        <taxon>Burkholderiales</taxon>
        <taxon>Burkholderiaceae</taxon>
        <taxon>Burkholderia</taxon>
        <taxon>pseudomallei group</taxon>
    </lineage>
</organism>
<keyword id="KW-0963">Cytoplasm</keyword>
<keyword id="KW-0396">Initiation factor</keyword>
<keyword id="KW-0648">Protein biosynthesis</keyword>
<keyword id="KW-0694">RNA-binding</keyword>
<keyword id="KW-0699">rRNA-binding</keyword>